<protein>
    <recommendedName>
        <fullName evidence="1">Probable acetate kinase</fullName>
        <ecNumber evidence="1">2.7.2.1</ecNumber>
    </recommendedName>
    <alternativeName>
        <fullName evidence="1">Acetokinase</fullName>
    </alternativeName>
</protein>
<name>ACKA_CHAGB</name>
<reference key="1">
    <citation type="journal article" date="2015" name="Genome Announc.">
        <title>Draft genome sequence of the cellulolytic fungus Chaetomium globosum.</title>
        <authorList>
            <person name="Cuomo C.A."/>
            <person name="Untereiner W.A."/>
            <person name="Ma L.-J."/>
            <person name="Grabherr M."/>
            <person name="Birren B.W."/>
        </authorList>
    </citation>
    <scope>NUCLEOTIDE SEQUENCE [LARGE SCALE GENOMIC DNA]</scope>
    <source>
        <strain>ATCC 6205 / CBS 148.51 / DSM 1962 / NBRC 6347 / NRRL 1970</strain>
    </source>
</reference>
<evidence type="ECO:0000255" key="1">
    <source>
        <dbReference type="HAMAP-Rule" id="MF_03131"/>
    </source>
</evidence>
<evidence type="ECO:0000256" key="2">
    <source>
        <dbReference type="SAM" id="MobiDB-lite"/>
    </source>
</evidence>
<evidence type="ECO:0000305" key="3"/>
<sequence length="459" mass="49007">MKTVILSVNAGSSSVKLSAYTAEQGQSPIQIAEVQVSGLTAPPASLKYERGGKTIVKSREVDDQVSDQRDAFSLILKTLIEDDDLHDIQTKDDIGIICHRIVHGGDYTKPQLITNGTYHHLENLNDLAPLHNANSLPIVRLCVQDFPSARNVACFDSQFHSTIPEHIRTYPINQDIARRGRLRKYGFHGISYSFITRATAEFLGKDPSDVNIIALHLGSGASACAIKGGKSWDTSMGLTPLAGLPGATRSGSVDPSLVFHYASDVGKLSPASTKDLHISRAEEILNKQAGWKALTGTTDFRVIAAAATTTSSPTPSPNPNPNPNPDPNPDPNPDPQNQNHRLAFALLVDRISAFVGAYYVSLHGRVDALVFAGGIGERSAALRAAVVEQVGCLGFAADGDEDFDGDGGEGAVVVDVGREAAGGSDLGGRPRPRVLVCRTDEQFEMARMCAEDAEFWGSG</sequence>
<keyword id="KW-0067">ATP-binding</keyword>
<keyword id="KW-0418">Kinase</keyword>
<keyword id="KW-0460">Magnesium</keyword>
<keyword id="KW-0479">Metal-binding</keyword>
<keyword id="KW-0547">Nucleotide-binding</keyword>
<keyword id="KW-1185">Reference proteome</keyword>
<keyword id="KW-0808">Transferase</keyword>
<accession>Q2HAJ4</accession>
<organism>
    <name type="scientific">Chaetomium globosum (strain ATCC 6205 / CBS 148.51 / DSM 1962 / NBRC 6347 / NRRL 1970)</name>
    <name type="common">Soil fungus</name>
    <dbReference type="NCBI Taxonomy" id="306901"/>
    <lineage>
        <taxon>Eukaryota</taxon>
        <taxon>Fungi</taxon>
        <taxon>Dikarya</taxon>
        <taxon>Ascomycota</taxon>
        <taxon>Pezizomycotina</taxon>
        <taxon>Sordariomycetes</taxon>
        <taxon>Sordariomycetidae</taxon>
        <taxon>Sordariales</taxon>
        <taxon>Chaetomiaceae</taxon>
        <taxon>Chaetomium</taxon>
    </lineage>
</organism>
<proteinExistence type="inferred from homology"/>
<feature type="chain" id="PRO_0000402094" description="Probable acetate kinase">
    <location>
        <begin position="1"/>
        <end position="459"/>
    </location>
</feature>
<feature type="region of interest" description="Disordered" evidence="2">
    <location>
        <begin position="308"/>
        <end position="338"/>
    </location>
</feature>
<feature type="compositionally biased region" description="Pro residues" evidence="2">
    <location>
        <begin position="314"/>
        <end position="334"/>
    </location>
</feature>
<feature type="active site" description="Proton donor/acceptor" evidence="1">
    <location>
        <position position="156"/>
    </location>
</feature>
<feature type="binding site" evidence="1">
    <location>
        <position position="9"/>
    </location>
    <ligand>
        <name>Mg(2+)</name>
        <dbReference type="ChEBI" id="CHEBI:18420"/>
    </ligand>
</feature>
<feature type="binding site" evidence="1">
    <location>
        <position position="16"/>
    </location>
    <ligand>
        <name>ATP</name>
        <dbReference type="ChEBI" id="CHEBI:30616"/>
    </ligand>
</feature>
<feature type="binding site" evidence="1">
    <location>
        <position position="100"/>
    </location>
    <ligand>
        <name>substrate</name>
    </ligand>
</feature>
<feature type="binding site" evidence="1">
    <location>
        <begin position="216"/>
        <end position="220"/>
    </location>
    <ligand>
        <name>ATP</name>
        <dbReference type="ChEBI" id="CHEBI:30616"/>
    </ligand>
</feature>
<feature type="binding site" evidence="1">
    <location>
        <begin position="299"/>
        <end position="301"/>
    </location>
    <ligand>
        <name>ATP</name>
        <dbReference type="ChEBI" id="CHEBI:30616"/>
    </ligand>
</feature>
<feature type="binding site" evidence="1">
    <location>
        <position position="441"/>
    </location>
    <ligand>
        <name>Mg(2+)</name>
        <dbReference type="ChEBI" id="CHEBI:18420"/>
    </ligand>
</feature>
<feature type="site" description="Transition state stabilizer" evidence="1">
    <location>
        <position position="188"/>
    </location>
</feature>
<feature type="site" description="Transition state stabilizer" evidence="1">
    <location>
        <position position="249"/>
    </location>
</feature>
<dbReference type="EC" id="2.7.2.1" evidence="1"/>
<dbReference type="EMBL" id="CH408030">
    <property type="protein sequence ID" value="EAQ90825.1"/>
    <property type="status" value="ALT_SEQ"/>
    <property type="molecule type" value="Genomic_DNA"/>
</dbReference>
<dbReference type="RefSeq" id="XP_001229276.1">
    <property type="nucleotide sequence ID" value="XM_001229275.1"/>
</dbReference>
<dbReference type="SMR" id="Q2HAJ4"/>
<dbReference type="STRING" id="306901.Q2HAJ4"/>
<dbReference type="GeneID" id="4388475"/>
<dbReference type="VEuPathDB" id="FungiDB:CHGG_02760"/>
<dbReference type="eggNOG" id="ENOG502QSJJ">
    <property type="taxonomic scope" value="Eukaryota"/>
</dbReference>
<dbReference type="HOGENOM" id="CLU_015938_0_0_1"/>
<dbReference type="InParanoid" id="Q2HAJ4"/>
<dbReference type="OrthoDB" id="67445at2759"/>
<dbReference type="UniPathway" id="UPA00340">
    <property type="reaction ID" value="UER00458"/>
</dbReference>
<dbReference type="Proteomes" id="UP000001056">
    <property type="component" value="Unassembled WGS sequence"/>
</dbReference>
<dbReference type="GO" id="GO:0008776">
    <property type="term" value="F:acetate kinase activity"/>
    <property type="evidence" value="ECO:0007669"/>
    <property type="project" value="UniProtKB-UniRule"/>
</dbReference>
<dbReference type="GO" id="GO:0005524">
    <property type="term" value="F:ATP binding"/>
    <property type="evidence" value="ECO:0007669"/>
    <property type="project" value="UniProtKB-KW"/>
</dbReference>
<dbReference type="GO" id="GO:0000287">
    <property type="term" value="F:magnesium ion binding"/>
    <property type="evidence" value="ECO:0007669"/>
    <property type="project" value="UniProtKB-UniRule"/>
</dbReference>
<dbReference type="GO" id="GO:0006083">
    <property type="term" value="P:acetate metabolic process"/>
    <property type="evidence" value="ECO:0007669"/>
    <property type="project" value="TreeGrafter"/>
</dbReference>
<dbReference type="GO" id="GO:0006085">
    <property type="term" value="P:acetyl-CoA biosynthetic process"/>
    <property type="evidence" value="ECO:0007669"/>
    <property type="project" value="UniProtKB-UniRule"/>
</dbReference>
<dbReference type="Gene3D" id="3.30.420.40">
    <property type="match status" value="2"/>
</dbReference>
<dbReference type="HAMAP" id="MF_00020">
    <property type="entry name" value="Acetate_kinase"/>
    <property type="match status" value="1"/>
</dbReference>
<dbReference type="InterPro" id="IPR004372">
    <property type="entry name" value="Ac/propionate_kinase"/>
</dbReference>
<dbReference type="InterPro" id="IPR000890">
    <property type="entry name" value="Aliphatic_acid_kin_short-chain"/>
</dbReference>
<dbReference type="InterPro" id="IPR023865">
    <property type="entry name" value="Aliphatic_acid_kinase_CS"/>
</dbReference>
<dbReference type="InterPro" id="IPR043129">
    <property type="entry name" value="ATPase_NBD"/>
</dbReference>
<dbReference type="PANTHER" id="PTHR21060">
    <property type="entry name" value="ACETATE KINASE"/>
    <property type="match status" value="1"/>
</dbReference>
<dbReference type="PANTHER" id="PTHR21060:SF15">
    <property type="entry name" value="ACETATE KINASE-RELATED"/>
    <property type="match status" value="1"/>
</dbReference>
<dbReference type="Pfam" id="PF00871">
    <property type="entry name" value="Acetate_kinase"/>
    <property type="match status" value="2"/>
</dbReference>
<dbReference type="PRINTS" id="PR00471">
    <property type="entry name" value="ACETATEKNASE"/>
</dbReference>
<dbReference type="SUPFAM" id="SSF53067">
    <property type="entry name" value="Actin-like ATPase domain"/>
    <property type="match status" value="3"/>
</dbReference>
<dbReference type="PROSITE" id="PS01075">
    <property type="entry name" value="ACETATE_KINASE_1"/>
    <property type="match status" value="1"/>
</dbReference>
<dbReference type="PROSITE" id="PS01076">
    <property type="entry name" value="ACETATE_KINASE_2"/>
    <property type="match status" value="1"/>
</dbReference>
<gene>
    <name type="ORF">CHGG_02760</name>
</gene>
<comment type="catalytic activity">
    <reaction evidence="1">
        <text>acetate + ATP = acetyl phosphate + ADP</text>
        <dbReference type="Rhea" id="RHEA:11352"/>
        <dbReference type="ChEBI" id="CHEBI:22191"/>
        <dbReference type="ChEBI" id="CHEBI:30089"/>
        <dbReference type="ChEBI" id="CHEBI:30616"/>
        <dbReference type="ChEBI" id="CHEBI:456216"/>
        <dbReference type="EC" id="2.7.2.1"/>
    </reaction>
</comment>
<comment type="cofactor">
    <cofactor evidence="1">
        <name>Mg(2+)</name>
        <dbReference type="ChEBI" id="CHEBI:18420"/>
    </cofactor>
</comment>
<comment type="pathway">
    <text evidence="1">Metabolic intermediate biosynthesis; acetyl-CoA biosynthesis; acetyl-CoA from acetate: step 1/2.</text>
</comment>
<comment type="similarity">
    <text evidence="1">Belongs to the acetokinase family.</text>
</comment>
<comment type="sequence caution" evidence="3">
    <conflict type="erroneous gene model prediction">
        <sequence resource="EMBL-CDS" id="EAQ90825"/>
    </conflict>
</comment>